<dbReference type="EC" id="2.7.7.77" evidence="1"/>
<dbReference type="EMBL" id="BA000037">
    <property type="protein sequence ID" value="BAC94480.1"/>
    <property type="molecule type" value="Genomic_DNA"/>
</dbReference>
<dbReference type="RefSeq" id="WP_038963150.1">
    <property type="nucleotide sequence ID" value="NC_005139.1"/>
</dbReference>
<dbReference type="SMR" id="Q7MKR2"/>
<dbReference type="STRING" id="672.VV93_v1c16080"/>
<dbReference type="KEGG" id="vvy:VV1716"/>
<dbReference type="PATRIC" id="fig|196600.6.peg.1691"/>
<dbReference type="eggNOG" id="COG0746">
    <property type="taxonomic scope" value="Bacteria"/>
</dbReference>
<dbReference type="HOGENOM" id="CLU_055597_5_1_6"/>
<dbReference type="Proteomes" id="UP000002675">
    <property type="component" value="Chromosome I"/>
</dbReference>
<dbReference type="GO" id="GO:0005737">
    <property type="term" value="C:cytoplasm"/>
    <property type="evidence" value="ECO:0007669"/>
    <property type="project" value="UniProtKB-SubCell"/>
</dbReference>
<dbReference type="GO" id="GO:0005525">
    <property type="term" value="F:GTP binding"/>
    <property type="evidence" value="ECO:0007669"/>
    <property type="project" value="UniProtKB-UniRule"/>
</dbReference>
<dbReference type="GO" id="GO:0046872">
    <property type="term" value="F:metal ion binding"/>
    <property type="evidence" value="ECO:0007669"/>
    <property type="project" value="UniProtKB-KW"/>
</dbReference>
<dbReference type="GO" id="GO:0061603">
    <property type="term" value="F:molybdenum cofactor guanylyltransferase activity"/>
    <property type="evidence" value="ECO:0007669"/>
    <property type="project" value="UniProtKB-EC"/>
</dbReference>
<dbReference type="GO" id="GO:1902758">
    <property type="term" value="P:bis(molybdopterin guanine dinucleotide)molybdenum biosynthetic process"/>
    <property type="evidence" value="ECO:0007669"/>
    <property type="project" value="TreeGrafter"/>
</dbReference>
<dbReference type="CDD" id="cd02503">
    <property type="entry name" value="MobA"/>
    <property type="match status" value="1"/>
</dbReference>
<dbReference type="Gene3D" id="3.90.550.10">
    <property type="entry name" value="Spore Coat Polysaccharide Biosynthesis Protein SpsA, Chain A"/>
    <property type="match status" value="1"/>
</dbReference>
<dbReference type="HAMAP" id="MF_00316">
    <property type="entry name" value="MobA"/>
    <property type="match status" value="1"/>
</dbReference>
<dbReference type="InterPro" id="IPR025877">
    <property type="entry name" value="MobA-like_NTP_Trfase"/>
</dbReference>
<dbReference type="InterPro" id="IPR013482">
    <property type="entry name" value="Molybde_CF_guanTrfase"/>
</dbReference>
<dbReference type="InterPro" id="IPR029044">
    <property type="entry name" value="Nucleotide-diphossugar_trans"/>
</dbReference>
<dbReference type="NCBIfam" id="TIGR02665">
    <property type="entry name" value="molyb_mobA"/>
    <property type="match status" value="1"/>
</dbReference>
<dbReference type="PANTHER" id="PTHR19136">
    <property type="entry name" value="MOLYBDENUM COFACTOR GUANYLYLTRANSFERASE"/>
    <property type="match status" value="1"/>
</dbReference>
<dbReference type="PANTHER" id="PTHR19136:SF81">
    <property type="entry name" value="MOLYBDENUM COFACTOR GUANYLYLTRANSFERASE"/>
    <property type="match status" value="1"/>
</dbReference>
<dbReference type="Pfam" id="PF12804">
    <property type="entry name" value="NTP_transf_3"/>
    <property type="match status" value="1"/>
</dbReference>
<dbReference type="SUPFAM" id="SSF53448">
    <property type="entry name" value="Nucleotide-diphospho-sugar transferases"/>
    <property type="match status" value="1"/>
</dbReference>
<gene>
    <name evidence="1" type="primary">mobA</name>
    <name type="ordered locus">VV1716</name>
</gene>
<proteinExistence type="inferred from homology"/>
<comment type="function">
    <text evidence="1">Transfers a GMP moiety from GTP to Mo-molybdopterin (Mo-MPT) cofactor (Moco or molybdenum cofactor) to form Mo-molybdopterin guanine dinucleotide (Mo-MGD) cofactor.</text>
</comment>
<comment type="catalytic activity">
    <reaction evidence="1">
        <text>Mo-molybdopterin + GTP + H(+) = Mo-molybdopterin guanine dinucleotide + diphosphate</text>
        <dbReference type="Rhea" id="RHEA:34243"/>
        <dbReference type="ChEBI" id="CHEBI:15378"/>
        <dbReference type="ChEBI" id="CHEBI:33019"/>
        <dbReference type="ChEBI" id="CHEBI:37565"/>
        <dbReference type="ChEBI" id="CHEBI:71302"/>
        <dbReference type="ChEBI" id="CHEBI:71310"/>
        <dbReference type="EC" id="2.7.7.77"/>
    </reaction>
</comment>
<comment type="cofactor">
    <cofactor evidence="1">
        <name>Mg(2+)</name>
        <dbReference type="ChEBI" id="CHEBI:18420"/>
    </cofactor>
</comment>
<comment type="subunit">
    <text evidence="1">Monomer.</text>
</comment>
<comment type="subcellular location">
    <subcellularLocation>
        <location evidence="1">Cytoplasm</location>
    </subcellularLocation>
</comment>
<comment type="domain">
    <text evidence="1">The N-terminal domain determines nucleotide recognition and specific binding, while the C-terminal domain determines the specific binding to the target protein.</text>
</comment>
<comment type="similarity">
    <text evidence="1">Belongs to the MobA family.</text>
</comment>
<protein>
    <recommendedName>
        <fullName evidence="1">Molybdenum cofactor guanylyltransferase</fullName>
        <shortName evidence="1">MoCo guanylyltransferase</shortName>
        <ecNumber evidence="1">2.7.7.77</ecNumber>
    </recommendedName>
    <alternativeName>
        <fullName evidence="1">GTP:molybdopterin guanylyltransferase</fullName>
    </alternativeName>
    <alternativeName>
        <fullName evidence="1">Mo-MPT guanylyltransferase</fullName>
    </alternativeName>
    <alternativeName>
        <fullName evidence="1">Molybdopterin guanylyltransferase</fullName>
    </alternativeName>
    <alternativeName>
        <fullName evidence="1">Molybdopterin-guanine dinucleotide synthase</fullName>
        <shortName evidence="1">MGD synthase</shortName>
    </alternativeName>
</protein>
<keyword id="KW-0963">Cytoplasm</keyword>
<keyword id="KW-0342">GTP-binding</keyword>
<keyword id="KW-0460">Magnesium</keyword>
<keyword id="KW-0479">Metal-binding</keyword>
<keyword id="KW-0501">Molybdenum cofactor biosynthesis</keyword>
<keyword id="KW-0547">Nucleotide-binding</keyword>
<keyword id="KW-0808">Transferase</keyword>
<name>MOBA_VIBVY</name>
<organism>
    <name type="scientific">Vibrio vulnificus (strain YJ016)</name>
    <dbReference type="NCBI Taxonomy" id="196600"/>
    <lineage>
        <taxon>Bacteria</taxon>
        <taxon>Pseudomonadati</taxon>
        <taxon>Pseudomonadota</taxon>
        <taxon>Gammaproteobacteria</taxon>
        <taxon>Vibrionales</taxon>
        <taxon>Vibrionaceae</taxon>
        <taxon>Vibrio</taxon>
    </lineage>
</organism>
<reference key="1">
    <citation type="journal article" date="2003" name="Genome Res.">
        <title>Comparative genome analysis of Vibrio vulnificus, a marine pathogen.</title>
        <authorList>
            <person name="Chen C.-Y."/>
            <person name="Wu K.-M."/>
            <person name="Chang Y.-C."/>
            <person name="Chang C.-H."/>
            <person name="Tsai H.-C."/>
            <person name="Liao T.-L."/>
            <person name="Liu Y.-M."/>
            <person name="Chen H.-J."/>
            <person name="Shen A.B.-T."/>
            <person name="Li J.-C."/>
            <person name="Su T.-L."/>
            <person name="Shao C.-P."/>
            <person name="Lee C.-T."/>
            <person name="Hor L.-I."/>
            <person name="Tsai S.-F."/>
        </authorList>
    </citation>
    <scope>NUCLEOTIDE SEQUENCE [LARGE SCALE GENOMIC DNA]</scope>
    <source>
        <strain>YJ016</strain>
    </source>
</reference>
<evidence type="ECO:0000255" key="1">
    <source>
        <dbReference type="HAMAP-Rule" id="MF_00316"/>
    </source>
</evidence>
<feature type="chain" id="PRO_0000134924" description="Molybdenum cofactor guanylyltransferase">
    <location>
        <begin position="1"/>
        <end position="195"/>
    </location>
</feature>
<feature type="binding site" evidence="1">
    <location>
        <begin position="12"/>
        <end position="14"/>
    </location>
    <ligand>
        <name>GTP</name>
        <dbReference type="ChEBI" id="CHEBI:37565"/>
    </ligand>
</feature>
<feature type="binding site" evidence="1">
    <location>
        <position position="25"/>
    </location>
    <ligand>
        <name>GTP</name>
        <dbReference type="ChEBI" id="CHEBI:37565"/>
    </ligand>
</feature>
<feature type="binding site" evidence="1">
    <location>
        <position position="53"/>
    </location>
    <ligand>
        <name>GTP</name>
        <dbReference type="ChEBI" id="CHEBI:37565"/>
    </ligand>
</feature>
<feature type="binding site" evidence="1">
    <location>
        <position position="70"/>
    </location>
    <ligand>
        <name>GTP</name>
        <dbReference type="ChEBI" id="CHEBI:37565"/>
    </ligand>
</feature>
<feature type="binding site" evidence="1">
    <location>
        <position position="100"/>
    </location>
    <ligand>
        <name>GTP</name>
        <dbReference type="ChEBI" id="CHEBI:37565"/>
    </ligand>
</feature>
<feature type="binding site" evidence="1">
    <location>
        <position position="100"/>
    </location>
    <ligand>
        <name>Mg(2+)</name>
        <dbReference type="ChEBI" id="CHEBI:18420"/>
    </ligand>
</feature>
<accession>Q7MKR2</accession>
<sequence length="195" mass="21990">MLQPTLTSWVILAGGQASRMGGKDKGLIALNNKPLIEYVIDRLTPQTSNILINANRNQDDYQQYGPVFGDHFQNFPGPMGGIHAGLLHASTDWVGFVPCDCPRINEDLVERFCRAVTDETDILVAHDGDHQQPVFTLYHKRVLPKLTAFLERGDRKIILLYKECHTQYVDFSDSPDCFVNLNTPEELTQFGQLES</sequence>